<proteinExistence type="evidence at protein level"/>
<evidence type="ECO:0000250" key="1"/>
<evidence type="ECO:0000255" key="2"/>
<evidence type="ECO:0000256" key="3">
    <source>
        <dbReference type="SAM" id="MobiDB-lite"/>
    </source>
</evidence>
<evidence type="ECO:0000269" key="4">
    <source>
    </source>
</evidence>
<sequence>MGRRSTSSTKSGKFMNPTDQARKEARKRELKKNKKQRMMVRAAVLKMKDPRQIIRDMEKLDEMEFNPVQQPLLNEKVLRDKRKKLRETFERIVRLYERENPETYKELRKLELEYETKRGQLSLYFDSVKNAESVEVDSIPLPEMPHAPSSILIQDIPLPGAQPPSILKKSSALGKASSLSAAALAGVPRLPAGRKPPGPPPGPPPPQILQLYGNTRRTEASAGSDTEMMDGGRDSDSKSEADEESDSQEDSSAEREDSDRGERDEERERADKHTGRSVRFADMPSPNKKKRRVVKTKSITPLQAMMLRMAGQSVPEEEEEDEEEEYSESEDSEAEDQASTDAPQPLVNPRLPVPSAPMAAQQPPSLMQAPPITGPPPLGPPPAPPMRPPGPPSGPPPGPPPGAPPFLRPPGLPSALRGPMPRLLPPGPPPGRPPGPPPGPPPGLPPGPPPRGPPPRLPPPAPPGMPPPPPPPRAGPPRMAPPLSLFPPPLNPNVLSAPPSIVPRQKSPAASSNEGAPSGSALQMPPPPGTTANPLAPTIEKRATVAGSGGASAQGGGATISAKPQIINPKAEVTRFVPTALRVRRDRAGGTGRREEERPPANQQTPAHQAPPIAHAPTPPNLKTKDQVYEAFMREMEGLL</sequence>
<feature type="chain" id="PRO_0000065944" description="WW domain-binding protein 11">
    <location>
        <begin position="1"/>
        <end position="640"/>
    </location>
</feature>
<feature type="region of interest" description="Disordered" evidence="3">
    <location>
        <begin position="1"/>
        <end position="37"/>
    </location>
</feature>
<feature type="region of interest" description="Disordered" evidence="3">
    <location>
        <begin position="155"/>
        <end position="174"/>
    </location>
</feature>
<feature type="region of interest" description="Disordered" evidence="3">
    <location>
        <begin position="187"/>
        <end position="563"/>
    </location>
</feature>
<feature type="region of interest" description="Disordered" evidence="3">
    <location>
        <begin position="582"/>
        <end position="625"/>
    </location>
</feature>
<feature type="coiled-coil region" evidence="2">
    <location>
        <begin position="75"/>
        <end position="122"/>
    </location>
</feature>
<feature type="short sequence motif" description="PGR">
    <location>
        <begin position="421"/>
        <end position="432"/>
    </location>
</feature>
<feature type="compositionally biased region" description="Polar residues" evidence="3">
    <location>
        <begin position="1"/>
        <end position="11"/>
    </location>
</feature>
<feature type="compositionally biased region" description="Basic residues" evidence="3">
    <location>
        <begin position="28"/>
        <end position="37"/>
    </location>
</feature>
<feature type="compositionally biased region" description="Pro residues" evidence="3">
    <location>
        <begin position="194"/>
        <end position="207"/>
    </location>
</feature>
<feature type="compositionally biased region" description="Basic and acidic residues" evidence="3">
    <location>
        <begin position="230"/>
        <end position="240"/>
    </location>
</feature>
<feature type="compositionally biased region" description="Acidic residues" evidence="3">
    <location>
        <begin position="241"/>
        <end position="251"/>
    </location>
</feature>
<feature type="compositionally biased region" description="Basic and acidic residues" evidence="3">
    <location>
        <begin position="252"/>
        <end position="274"/>
    </location>
</feature>
<feature type="compositionally biased region" description="Acidic residues" evidence="3">
    <location>
        <begin position="315"/>
        <end position="338"/>
    </location>
</feature>
<feature type="compositionally biased region" description="Low complexity" evidence="3">
    <location>
        <begin position="356"/>
        <end position="371"/>
    </location>
</feature>
<feature type="compositionally biased region" description="Pro residues" evidence="3">
    <location>
        <begin position="372"/>
        <end position="412"/>
    </location>
</feature>
<feature type="compositionally biased region" description="Pro residues" evidence="3">
    <location>
        <begin position="422"/>
        <end position="491"/>
    </location>
</feature>
<feature type="compositionally biased region" description="Gly residues" evidence="3">
    <location>
        <begin position="547"/>
        <end position="558"/>
    </location>
</feature>
<feature type="compositionally biased region" description="Basic and acidic residues" evidence="3">
    <location>
        <begin position="586"/>
        <end position="599"/>
    </location>
</feature>
<feature type="compositionally biased region" description="Low complexity" evidence="3">
    <location>
        <begin position="603"/>
        <end position="616"/>
    </location>
</feature>
<feature type="modified residue" description="Phosphoserine" evidence="4">
    <location>
        <position position="285"/>
    </location>
</feature>
<dbReference type="EMBL" id="BC065662">
    <property type="protein sequence ID" value="AAH65662.1"/>
    <property type="molecule type" value="mRNA"/>
</dbReference>
<dbReference type="RefSeq" id="NP_991215.1">
    <property type="nucleotide sequence ID" value="NM_205652.1"/>
</dbReference>
<dbReference type="SMR" id="Q6P0D5"/>
<dbReference type="FunCoup" id="Q6P0D5">
    <property type="interactions" value="1227"/>
</dbReference>
<dbReference type="STRING" id="7955.ENSDARP00000140561"/>
<dbReference type="iPTMnet" id="Q6P0D5"/>
<dbReference type="PaxDb" id="7955-ENSDARP00000019750"/>
<dbReference type="GeneID" id="402950"/>
<dbReference type="KEGG" id="dre:402950"/>
<dbReference type="AGR" id="ZFIN:ZDB-GENE-040426-1829"/>
<dbReference type="CTD" id="51729"/>
<dbReference type="ZFIN" id="ZDB-GENE-040426-1829">
    <property type="gene designation" value="wbp11"/>
</dbReference>
<dbReference type="eggNOG" id="KOG4672">
    <property type="taxonomic scope" value="Eukaryota"/>
</dbReference>
<dbReference type="InParanoid" id="Q6P0D5"/>
<dbReference type="OrthoDB" id="10067323at2759"/>
<dbReference type="Reactome" id="R-DRE-72163">
    <property type="pathway name" value="mRNA Splicing - Major Pathway"/>
</dbReference>
<dbReference type="PRO" id="PR:Q6P0D5"/>
<dbReference type="Proteomes" id="UP000000437">
    <property type="component" value="Unplaced"/>
</dbReference>
<dbReference type="GO" id="GO:0005737">
    <property type="term" value="C:cytoplasm"/>
    <property type="evidence" value="ECO:0007669"/>
    <property type="project" value="UniProtKB-SubCell"/>
</dbReference>
<dbReference type="GO" id="GO:0005634">
    <property type="term" value="C:nucleus"/>
    <property type="evidence" value="ECO:0007669"/>
    <property type="project" value="UniProtKB-SubCell"/>
</dbReference>
<dbReference type="GO" id="GO:0006397">
    <property type="term" value="P:mRNA processing"/>
    <property type="evidence" value="ECO:0007669"/>
    <property type="project" value="UniProtKB-KW"/>
</dbReference>
<dbReference type="GO" id="GO:0008380">
    <property type="term" value="P:RNA splicing"/>
    <property type="evidence" value="ECO:0007669"/>
    <property type="project" value="UniProtKB-KW"/>
</dbReference>
<dbReference type="GO" id="GO:0006364">
    <property type="term" value="P:rRNA processing"/>
    <property type="evidence" value="ECO:0007669"/>
    <property type="project" value="UniProtKB-KW"/>
</dbReference>
<dbReference type="InterPro" id="IPR019007">
    <property type="entry name" value="WW_dom-bd_prot_11"/>
</dbReference>
<dbReference type="PANTHER" id="PTHR13361">
    <property type="entry name" value="WW DOMAIN-BINDING PROTEIN 11"/>
    <property type="match status" value="1"/>
</dbReference>
<dbReference type="PANTHER" id="PTHR13361:SF1">
    <property type="entry name" value="WW DOMAIN-BINDING PROTEIN 11"/>
    <property type="match status" value="1"/>
</dbReference>
<dbReference type="Pfam" id="PF09429">
    <property type="entry name" value="Wbp11"/>
    <property type="match status" value="1"/>
</dbReference>
<protein>
    <recommendedName>
        <fullName>WW domain-binding protein 11</fullName>
        <shortName>WBP-11</shortName>
    </recommendedName>
</protein>
<accession>Q6P0D5</accession>
<organism>
    <name type="scientific">Danio rerio</name>
    <name type="common">Zebrafish</name>
    <name type="synonym">Brachydanio rerio</name>
    <dbReference type="NCBI Taxonomy" id="7955"/>
    <lineage>
        <taxon>Eukaryota</taxon>
        <taxon>Metazoa</taxon>
        <taxon>Chordata</taxon>
        <taxon>Craniata</taxon>
        <taxon>Vertebrata</taxon>
        <taxon>Euteleostomi</taxon>
        <taxon>Actinopterygii</taxon>
        <taxon>Neopterygii</taxon>
        <taxon>Teleostei</taxon>
        <taxon>Ostariophysi</taxon>
        <taxon>Cypriniformes</taxon>
        <taxon>Danionidae</taxon>
        <taxon>Danioninae</taxon>
        <taxon>Danio</taxon>
    </lineage>
</organism>
<keyword id="KW-0175">Coiled coil</keyword>
<keyword id="KW-0963">Cytoplasm</keyword>
<keyword id="KW-0507">mRNA processing</keyword>
<keyword id="KW-0508">mRNA splicing</keyword>
<keyword id="KW-0539">Nucleus</keyword>
<keyword id="KW-0597">Phosphoprotein</keyword>
<keyword id="KW-1185">Reference proteome</keyword>
<keyword id="KW-0698">rRNA processing</keyword>
<reference key="1">
    <citation type="submission" date="2004-01" db="EMBL/GenBank/DDBJ databases">
        <authorList>
            <consortium name="NIH - Zebrafish Gene Collection (ZGC) project"/>
        </authorList>
    </citation>
    <scope>NUCLEOTIDE SEQUENCE [LARGE SCALE MRNA]</scope>
    <source>
        <tissue>Embryo</tissue>
    </source>
</reference>
<reference key="2">
    <citation type="journal article" date="2008" name="J. Proteome Res.">
        <title>Online automated in vivo zebrafish phosphoproteomics: from large-scale analysis down to a single embryo.</title>
        <authorList>
            <person name="Lemeer S."/>
            <person name="Pinkse M.W.H."/>
            <person name="Mohammed S."/>
            <person name="van Breukelen B."/>
            <person name="den Hertog J."/>
            <person name="Slijper M."/>
            <person name="Heck A.J.R."/>
        </authorList>
    </citation>
    <scope>PHOSPHORYLATION [LARGE SCALE ANALYSIS] AT SER-285</scope>
    <scope>IDENTIFICATION BY MASS SPECTROMETRY</scope>
    <source>
        <tissue>Embryo</tissue>
    </source>
</reference>
<gene>
    <name type="primary">wbp11</name>
    <name type="ORF">zgc:77390</name>
</gene>
<name>WBP11_DANRE</name>
<comment type="function">
    <text evidence="1">Activates pre-mRNA splicing.</text>
</comment>
<comment type="subcellular location">
    <subcellularLocation>
        <location evidence="1">Cytoplasm</location>
    </subcellularLocation>
    <subcellularLocation>
        <location evidence="1">Nucleus</location>
    </subcellularLocation>
</comment>